<reference key="1">
    <citation type="journal article" date="2004" name="Genome Res.">
        <title>Genome sequence of Haloarcula marismortui: a halophilic archaeon from the Dead Sea.</title>
        <authorList>
            <person name="Baliga N.S."/>
            <person name="Bonneau R."/>
            <person name="Facciotti M.T."/>
            <person name="Pan M."/>
            <person name="Glusman G."/>
            <person name="Deutsch E.W."/>
            <person name="Shannon P."/>
            <person name="Chiu Y."/>
            <person name="Weng R.S."/>
            <person name="Gan R.R."/>
            <person name="Hung P."/>
            <person name="Date S.V."/>
            <person name="Marcotte E."/>
            <person name="Hood L."/>
            <person name="Ng W.V."/>
        </authorList>
    </citation>
    <scope>NUCLEOTIDE SEQUENCE [LARGE SCALE GENOMIC DNA]</scope>
    <source>
        <strain>ATCC 43049 / DSM 3752 / JCM 8966 / VKM B-1809</strain>
    </source>
</reference>
<sequence length="335" mass="36748">MELTLEGDVVRAGYEARERFYDSRGYGKVRNGDIDLAPVEAAHLLYRGDIESIDGMDFRGFLGSAAVSEVDFAVYKDLRDRGFYLTPAREGWVDDAAGADFVVYPRGKGPWDNEVAYRVRIIGERDTAVATDLGGCVLAVVDEESEVTYLDTDRREVSGTSDAAVPATAGELLGERVVCWEPPAELYEQAFYGQQLGDDGAVQLSLVEAAYLTQEGMLTVEGGADAVVERGREVEGDRFDRRLAVYTALRASGVAPKTGFKFGADFRTYADVESAENLGHSELLVRVLPADHRFEPRDLALDVRLAHGVRKTMVFALTTDGGDEIEWVAVERLTP</sequence>
<name>ENDA_HALMA</name>
<comment type="function">
    <text evidence="1">Endonuclease that removes tRNA introns. Cleaves pre-tRNA at the 5'- and 3'-splice sites to release the intron. The products are an intron and two tRNA half-molecules bearing 2',3' cyclic phosphate and 5'-OH termini. Recognizes a pseudosymmetric substrate in which 2 bulged loops of 3 bases are separated by a stem of 4 bp (By similarity).</text>
</comment>
<comment type="catalytic activity">
    <reaction evidence="2">
        <text>pretRNA = a 3'-half-tRNA molecule with a 5'-OH end + a 5'-half-tRNA molecule with a 2',3'-cyclic phosphate end + an intron with a 2',3'-cyclic phosphate and a 5'-hydroxyl terminus.</text>
        <dbReference type="EC" id="4.6.1.16"/>
    </reaction>
</comment>
<comment type="subunit">
    <text evidence="2">Homodimer.</text>
</comment>
<comment type="similarity">
    <text evidence="2">Belongs to the tRNA-intron endonuclease family. Archaeal long subfamily.</text>
</comment>
<accession>Q5UYF6</accession>
<gene>
    <name evidence="2" type="primary">endA</name>
    <name type="ordered locus">rrnAC2964</name>
</gene>
<protein>
    <recommendedName>
        <fullName evidence="2">tRNA-splicing endonuclease</fullName>
        <ecNumber evidence="2">4.6.1.16</ecNumber>
    </recommendedName>
    <alternativeName>
        <fullName evidence="2">tRNA-intron endonuclease</fullName>
    </alternativeName>
</protein>
<proteinExistence type="inferred from homology"/>
<organism>
    <name type="scientific">Haloarcula marismortui (strain ATCC 43049 / DSM 3752 / JCM 8966 / VKM B-1809)</name>
    <name type="common">Halobacterium marismortui</name>
    <dbReference type="NCBI Taxonomy" id="272569"/>
    <lineage>
        <taxon>Archaea</taxon>
        <taxon>Methanobacteriati</taxon>
        <taxon>Methanobacteriota</taxon>
        <taxon>Stenosarchaea group</taxon>
        <taxon>Halobacteria</taxon>
        <taxon>Halobacteriales</taxon>
        <taxon>Haloarculaceae</taxon>
        <taxon>Haloarcula</taxon>
    </lineage>
</organism>
<keyword id="KW-0456">Lyase</keyword>
<keyword id="KW-1185">Reference proteome</keyword>
<keyword id="KW-0819">tRNA processing</keyword>
<evidence type="ECO:0000250" key="1"/>
<evidence type="ECO:0000255" key="2">
    <source>
        <dbReference type="HAMAP-Rule" id="MF_01834"/>
    </source>
</evidence>
<dbReference type="EC" id="4.6.1.16" evidence="2"/>
<dbReference type="EMBL" id="AY596297">
    <property type="protein sequence ID" value="AAV47697.1"/>
    <property type="molecule type" value="Genomic_DNA"/>
</dbReference>
<dbReference type="RefSeq" id="WP_004960627.1">
    <property type="nucleotide sequence ID" value="NZ_CP039138.1"/>
</dbReference>
<dbReference type="SMR" id="Q5UYF6"/>
<dbReference type="STRING" id="272569.rrnAC2964"/>
<dbReference type="PaxDb" id="272569-rrnAC2964"/>
<dbReference type="EnsemblBacteria" id="AAV47697">
    <property type="protein sequence ID" value="AAV47697"/>
    <property type="gene ID" value="rrnAC2964"/>
</dbReference>
<dbReference type="GeneID" id="64823801"/>
<dbReference type="KEGG" id="hma:rrnAC2964"/>
<dbReference type="PATRIC" id="fig|272569.17.peg.3524"/>
<dbReference type="eggNOG" id="arCOG01701">
    <property type="taxonomic scope" value="Archaea"/>
</dbReference>
<dbReference type="HOGENOM" id="CLU_791347_0_0_2"/>
<dbReference type="Proteomes" id="UP000001169">
    <property type="component" value="Chromosome I"/>
</dbReference>
<dbReference type="GO" id="GO:0016829">
    <property type="term" value="F:lyase activity"/>
    <property type="evidence" value="ECO:0007669"/>
    <property type="project" value="UniProtKB-KW"/>
</dbReference>
<dbReference type="GO" id="GO:0003676">
    <property type="term" value="F:nucleic acid binding"/>
    <property type="evidence" value="ECO:0007669"/>
    <property type="project" value="InterPro"/>
</dbReference>
<dbReference type="GO" id="GO:0000213">
    <property type="term" value="F:tRNA-intron endonuclease activity"/>
    <property type="evidence" value="ECO:0007669"/>
    <property type="project" value="UniProtKB-UniRule"/>
</dbReference>
<dbReference type="GO" id="GO:0000379">
    <property type="term" value="P:tRNA-type intron splice site recognition and cleavage"/>
    <property type="evidence" value="ECO:0007669"/>
    <property type="project" value="TreeGrafter"/>
</dbReference>
<dbReference type="CDD" id="cd22363">
    <property type="entry name" value="tRNA-intron_lyase_C"/>
    <property type="match status" value="2"/>
</dbReference>
<dbReference type="Gene3D" id="3.40.1350.10">
    <property type="match status" value="2"/>
</dbReference>
<dbReference type="Gene3D" id="3.40.1170.20">
    <property type="entry name" value="tRNA intron endonuclease, N-terminal domain"/>
    <property type="match status" value="2"/>
</dbReference>
<dbReference type="HAMAP" id="MF_01834">
    <property type="entry name" value="EndA_long"/>
    <property type="match status" value="1"/>
</dbReference>
<dbReference type="InterPro" id="IPR011856">
    <property type="entry name" value="tRNA_endonuc-like_dom_sf"/>
</dbReference>
<dbReference type="InterPro" id="IPR036167">
    <property type="entry name" value="tRNA_intron_Endo_cat-like_sf"/>
</dbReference>
<dbReference type="InterPro" id="IPR006677">
    <property type="entry name" value="tRNA_intron_Endonuc_cat-like"/>
</dbReference>
<dbReference type="InterPro" id="IPR006678">
    <property type="entry name" value="tRNA_intron_Endonuc_N"/>
</dbReference>
<dbReference type="InterPro" id="IPR036740">
    <property type="entry name" value="tRNA_intron_Endonuc_N_sf"/>
</dbReference>
<dbReference type="InterPro" id="IPR006676">
    <property type="entry name" value="tRNA_splic"/>
</dbReference>
<dbReference type="InterPro" id="IPR023516">
    <property type="entry name" value="tRNA_splic_arch_long"/>
</dbReference>
<dbReference type="NCBIfam" id="TIGR00324">
    <property type="entry name" value="endA"/>
    <property type="match status" value="1"/>
</dbReference>
<dbReference type="NCBIfam" id="NF006794">
    <property type="entry name" value="PRK09300.1-1"/>
    <property type="match status" value="1"/>
</dbReference>
<dbReference type="PANTHER" id="PTHR13070:SF0">
    <property type="entry name" value="TRNA-SPLICING ENDONUCLEASE SUBUNIT SEN34"/>
    <property type="match status" value="1"/>
</dbReference>
<dbReference type="PANTHER" id="PTHR13070">
    <property type="entry name" value="TRNA-SPLICING ENDONUCLEASE SUBUNIT SEN34-RELATED"/>
    <property type="match status" value="1"/>
</dbReference>
<dbReference type="Pfam" id="PF01974">
    <property type="entry name" value="tRNA_int_endo"/>
    <property type="match status" value="1"/>
</dbReference>
<dbReference type="Pfam" id="PF02778">
    <property type="entry name" value="tRNA_int_endo_N"/>
    <property type="match status" value="2"/>
</dbReference>
<dbReference type="SUPFAM" id="SSF53032">
    <property type="entry name" value="tRNA-intron endonuclease catalytic domain-like"/>
    <property type="match status" value="2"/>
</dbReference>
<dbReference type="SUPFAM" id="SSF55267">
    <property type="entry name" value="tRNA-intron endonuclease N-terminal domain-like"/>
    <property type="match status" value="2"/>
</dbReference>
<feature type="chain" id="PRO_0000309815" description="tRNA-splicing endonuclease">
    <location>
        <begin position="1"/>
        <end position="335"/>
    </location>
</feature>
<feature type="active site" evidence="2">
    <location>
        <position position="269"/>
    </location>
</feature>
<feature type="active site" evidence="2">
    <location>
        <position position="280"/>
    </location>
</feature>
<feature type="active site" evidence="2">
    <location>
        <position position="311"/>
    </location>
</feature>